<sequence>MQQSPTAGKIINCKAAVAWQPAAPLSIENVQVFPPRVHEVRIKIVNSGVCHTDAYTLSGKDPEGLFPVILGHEGAGIVESVGPQVTTVQVGDPVIALYTPECKTCKFCKSGKTNLCGRIRTTQGKGLMPDGTSRFSCNGNTLLHFMGCSTFSEYTVVADISVVAIERLAPLDSVCLLGCGITTGYGAATITADIKEGDSVAVFGLGSVGLAVIQGAVKKRAGRIFGIDVNPEKKNWAMSFGATDFINPNDLQSPIQDVLIHETDGGLDWTFDCTGNVHVMRSALEACHKGWGQSIVIGVAAAGQEISTRPFQLVTGRVWRGCAFGGVKGRSQLPDLVKEYLDHKLEIDKYITHRRPLKEINEAFTDMHNGNCIKTVLSIP</sequence>
<reference key="1">
    <citation type="journal article" date="2002" name="Nature">
        <title>The genome sequence of Schizosaccharomyces pombe.</title>
        <authorList>
            <person name="Wood V."/>
            <person name="Gwilliam R."/>
            <person name="Rajandream M.A."/>
            <person name="Lyne M.H."/>
            <person name="Lyne R."/>
            <person name="Stewart A."/>
            <person name="Sgouros J.G."/>
            <person name="Peat N."/>
            <person name="Hayles J."/>
            <person name="Baker S.G."/>
            <person name="Basham D."/>
            <person name="Bowman S."/>
            <person name="Brooks K."/>
            <person name="Brown D."/>
            <person name="Brown S."/>
            <person name="Chillingworth T."/>
            <person name="Churcher C.M."/>
            <person name="Collins M."/>
            <person name="Connor R."/>
            <person name="Cronin A."/>
            <person name="Davis P."/>
            <person name="Feltwell T."/>
            <person name="Fraser A."/>
            <person name="Gentles S."/>
            <person name="Goble A."/>
            <person name="Hamlin N."/>
            <person name="Harris D.E."/>
            <person name="Hidalgo J."/>
            <person name="Hodgson G."/>
            <person name="Holroyd S."/>
            <person name="Hornsby T."/>
            <person name="Howarth S."/>
            <person name="Huckle E.J."/>
            <person name="Hunt S."/>
            <person name="Jagels K."/>
            <person name="James K.D."/>
            <person name="Jones L."/>
            <person name="Jones M."/>
            <person name="Leather S."/>
            <person name="McDonald S."/>
            <person name="McLean J."/>
            <person name="Mooney P."/>
            <person name="Moule S."/>
            <person name="Mungall K.L."/>
            <person name="Murphy L.D."/>
            <person name="Niblett D."/>
            <person name="Odell C."/>
            <person name="Oliver K."/>
            <person name="O'Neil S."/>
            <person name="Pearson D."/>
            <person name="Quail M.A."/>
            <person name="Rabbinowitsch E."/>
            <person name="Rutherford K.M."/>
            <person name="Rutter S."/>
            <person name="Saunders D."/>
            <person name="Seeger K."/>
            <person name="Sharp S."/>
            <person name="Skelton J."/>
            <person name="Simmonds M.N."/>
            <person name="Squares R."/>
            <person name="Squares S."/>
            <person name="Stevens K."/>
            <person name="Taylor K."/>
            <person name="Taylor R.G."/>
            <person name="Tivey A."/>
            <person name="Walsh S.V."/>
            <person name="Warren T."/>
            <person name="Whitehead S."/>
            <person name="Woodward J.R."/>
            <person name="Volckaert G."/>
            <person name="Aert R."/>
            <person name="Robben J."/>
            <person name="Grymonprez B."/>
            <person name="Weltjens I."/>
            <person name="Vanstreels E."/>
            <person name="Rieger M."/>
            <person name="Schaefer M."/>
            <person name="Mueller-Auer S."/>
            <person name="Gabel C."/>
            <person name="Fuchs M."/>
            <person name="Duesterhoeft A."/>
            <person name="Fritzc C."/>
            <person name="Holzer E."/>
            <person name="Moestl D."/>
            <person name="Hilbert H."/>
            <person name="Borzym K."/>
            <person name="Langer I."/>
            <person name="Beck A."/>
            <person name="Lehrach H."/>
            <person name="Reinhardt R."/>
            <person name="Pohl T.M."/>
            <person name="Eger P."/>
            <person name="Zimmermann W."/>
            <person name="Wedler H."/>
            <person name="Wambutt R."/>
            <person name="Purnelle B."/>
            <person name="Goffeau A."/>
            <person name="Cadieu E."/>
            <person name="Dreano S."/>
            <person name="Gloux S."/>
            <person name="Lelaure V."/>
            <person name="Mottier S."/>
            <person name="Galibert F."/>
            <person name="Aves S.J."/>
            <person name="Xiang Z."/>
            <person name="Hunt C."/>
            <person name="Moore K."/>
            <person name="Hurst S.M."/>
            <person name="Lucas M."/>
            <person name="Rochet M."/>
            <person name="Gaillardin C."/>
            <person name="Tallada V.A."/>
            <person name="Garzon A."/>
            <person name="Thode G."/>
            <person name="Daga R.R."/>
            <person name="Cruzado L."/>
            <person name="Jimenez J."/>
            <person name="Sanchez M."/>
            <person name="del Rey F."/>
            <person name="Benito J."/>
            <person name="Dominguez A."/>
            <person name="Revuelta J.L."/>
            <person name="Moreno S."/>
            <person name="Armstrong J."/>
            <person name="Forsburg S.L."/>
            <person name="Cerutti L."/>
            <person name="Lowe T."/>
            <person name="McCombie W.R."/>
            <person name="Paulsen I."/>
            <person name="Potashkin J."/>
            <person name="Shpakovski G.V."/>
            <person name="Ussery D."/>
            <person name="Barrell B.G."/>
            <person name="Nurse P."/>
        </authorList>
    </citation>
    <scope>NUCLEOTIDE SEQUENCE [LARGE SCALE GENOMIC DNA]</scope>
    <source>
        <strain>972 / ATCC 24843</strain>
    </source>
</reference>
<proteinExistence type="inferred from homology"/>
<gene>
    <name type="ORF">SPCC13B11.04c</name>
    <name type="ORF">SPCC777.01c</name>
</gene>
<evidence type="ECO:0000250" key="1">
    <source>
        <dbReference type="UniProtKB" id="P06525"/>
    </source>
</evidence>
<evidence type="ECO:0000250" key="2">
    <source>
        <dbReference type="UniProtKB" id="P32771"/>
    </source>
</evidence>
<evidence type="ECO:0000250" key="3">
    <source>
        <dbReference type="UniProtKB" id="Q96533"/>
    </source>
</evidence>
<evidence type="ECO:0000305" key="4"/>
<name>FADH2_SCHPO</name>
<feature type="chain" id="PRO_0000160784" description="Putative S-(hydroxymethyl)glutathione dehydrogenase 2">
    <location>
        <begin position="1"/>
        <end position="380"/>
    </location>
</feature>
<feature type="binding site" evidence="3">
    <location>
        <position position="50"/>
    </location>
    <ligand>
        <name>Zn(2+)</name>
        <dbReference type="ChEBI" id="CHEBI:29105"/>
        <label>1</label>
        <note>catalytic</note>
    </ligand>
</feature>
<feature type="binding site" evidence="3">
    <location>
        <position position="51"/>
    </location>
    <ligand>
        <name>NAD(+)</name>
        <dbReference type="ChEBI" id="CHEBI:57540"/>
    </ligand>
</feature>
<feature type="binding site" evidence="3">
    <location>
        <position position="72"/>
    </location>
    <ligand>
        <name>Zn(2+)</name>
        <dbReference type="ChEBI" id="CHEBI:29105"/>
        <label>1</label>
        <note>catalytic</note>
    </ligand>
</feature>
<feature type="binding site" evidence="3">
    <location>
        <position position="73"/>
    </location>
    <ligand>
        <name>Zn(2+)</name>
        <dbReference type="ChEBI" id="CHEBI:29105"/>
        <label>1</label>
        <note>catalytic</note>
    </ligand>
</feature>
<feature type="binding site" evidence="3">
    <location>
        <position position="102"/>
    </location>
    <ligand>
        <name>Zn(2+)</name>
        <dbReference type="ChEBI" id="CHEBI:29105"/>
        <label>2</label>
    </ligand>
</feature>
<feature type="binding site" evidence="3">
    <location>
        <position position="105"/>
    </location>
    <ligand>
        <name>Zn(2+)</name>
        <dbReference type="ChEBI" id="CHEBI:29105"/>
        <label>2</label>
    </ligand>
</feature>
<feature type="binding site" evidence="3">
    <location>
        <position position="108"/>
    </location>
    <ligand>
        <name>Zn(2+)</name>
        <dbReference type="ChEBI" id="CHEBI:29105"/>
        <label>2</label>
    </ligand>
</feature>
<feature type="binding site" evidence="3">
    <location>
        <position position="116"/>
    </location>
    <ligand>
        <name>Zn(2+)</name>
        <dbReference type="ChEBI" id="CHEBI:29105"/>
        <label>2</label>
    </ligand>
</feature>
<feature type="binding site" evidence="3">
    <location>
        <position position="179"/>
    </location>
    <ligand>
        <name>Zn(2+)</name>
        <dbReference type="ChEBI" id="CHEBI:29105"/>
        <label>1</label>
        <note>catalytic</note>
    </ligand>
</feature>
<feature type="binding site" evidence="3">
    <location>
        <begin position="204"/>
        <end position="209"/>
    </location>
    <ligand>
        <name>NAD(+)</name>
        <dbReference type="ChEBI" id="CHEBI:57540"/>
    </ligand>
</feature>
<feature type="binding site" evidence="3">
    <location>
        <position position="228"/>
    </location>
    <ligand>
        <name>NAD(+)</name>
        <dbReference type="ChEBI" id="CHEBI:57540"/>
    </ligand>
</feature>
<feature type="binding site" evidence="3">
    <location>
        <begin position="297"/>
        <end position="299"/>
    </location>
    <ligand>
        <name>NAD(+)</name>
        <dbReference type="ChEBI" id="CHEBI:57540"/>
    </ligand>
</feature>
<accession>O74540</accession>
<comment type="function">
    <text evidence="2">Oxidizes long-chain alcohols and, in the presence of glutathione, is able to oxidize formaldehyde. Also acts as a S-nitroso-glutathione reductase by catalyzing the NADH-dependent reduction of S-nitrosoglutathione, thereby regulating protein S-nitrosylation.</text>
</comment>
<comment type="catalytic activity">
    <reaction evidence="2">
        <text>a primary alcohol + NAD(+) = an aldehyde + NADH + H(+)</text>
        <dbReference type="Rhea" id="RHEA:10736"/>
        <dbReference type="ChEBI" id="CHEBI:15378"/>
        <dbReference type="ChEBI" id="CHEBI:15734"/>
        <dbReference type="ChEBI" id="CHEBI:17478"/>
        <dbReference type="ChEBI" id="CHEBI:57540"/>
        <dbReference type="ChEBI" id="CHEBI:57945"/>
        <dbReference type="EC" id="1.1.1.1"/>
    </reaction>
</comment>
<comment type="catalytic activity">
    <reaction evidence="2">
        <text>a secondary alcohol + NAD(+) = a ketone + NADH + H(+)</text>
        <dbReference type="Rhea" id="RHEA:10740"/>
        <dbReference type="ChEBI" id="CHEBI:15378"/>
        <dbReference type="ChEBI" id="CHEBI:17087"/>
        <dbReference type="ChEBI" id="CHEBI:35681"/>
        <dbReference type="ChEBI" id="CHEBI:57540"/>
        <dbReference type="ChEBI" id="CHEBI:57945"/>
        <dbReference type="EC" id="1.1.1.1"/>
    </reaction>
</comment>
<comment type="catalytic activity">
    <reaction evidence="2">
        <text>S-(hydroxymethyl)glutathione + NADP(+) = S-formylglutathione + NADPH + H(+)</text>
        <dbReference type="Rhea" id="RHEA:19981"/>
        <dbReference type="ChEBI" id="CHEBI:15378"/>
        <dbReference type="ChEBI" id="CHEBI:57688"/>
        <dbReference type="ChEBI" id="CHEBI:57783"/>
        <dbReference type="ChEBI" id="CHEBI:58349"/>
        <dbReference type="ChEBI" id="CHEBI:58758"/>
        <dbReference type="EC" id="1.1.1.284"/>
    </reaction>
</comment>
<comment type="catalytic activity">
    <reaction evidence="1">
        <text>S-(hydroxymethyl)glutathione + NAD(+) = S-formylglutathione + NADH + H(+)</text>
        <dbReference type="Rhea" id="RHEA:19985"/>
        <dbReference type="ChEBI" id="CHEBI:15378"/>
        <dbReference type="ChEBI" id="CHEBI:57540"/>
        <dbReference type="ChEBI" id="CHEBI:57688"/>
        <dbReference type="ChEBI" id="CHEBI:57945"/>
        <dbReference type="ChEBI" id="CHEBI:58758"/>
        <dbReference type="EC" id="1.1.1.284"/>
    </reaction>
</comment>
<comment type="catalytic activity">
    <reaction evidence="2">
        <text>S-nitrosoglutathione + NADH + H(+) = S-(hydroxysulfenamide)glutathione + NAD(+)</text>
        <dbReference type="Rhea" id="RHEA:78371"/>
        <dbReference type="ChEBI" id="CHEBI:15378"/>
        <dbReference type="ChEBI" id="CHEBI:57540"/>
        <dbReference type="ChEBI" id="CHEBI:57945"/>
        <dbReference type="ChEBI" id="CHEBI:145544"/>
        <dbReference type="ChEBI" id="CHEBI:229723"/>
    </reaction>
</comment>
<comment type="cofactor">
    <cofactor evidence="1">
        <name>Zn(2+)</name>
        <dbReference type="ChEBI" id="CHEBI:29105"/>
    </cofactor>
    <text evidence="1">Binds 2 Zn(2+) ions per subunit.</text>
</comment>
<comment type="similarity">
    <text evidence="4">Belongs to the zinc-containing alcohol dehydrogenase family. Class-III subfamily.</text>
</comment>
<protein>
    <recommendedName>
        <fullName>Putative S-(hydroxymethyl)glutathione dehydrogenase 2</fullName>
        <ecNumber evidence="2">1.1.1.284</ecNumber>
    </recommendedName>
    <alternativeName>
        <fullName evidence="2">Alcohol dehydrogenase 2</fullName>
        <ecNumber evidence="2">1.1.1.1</ecNumber>
    </alternativeName>
    <alternativeName>
        <fullName>Glutathione-dependent formaldehyde dehydrogenase 2</fullName>
        <shortName>FALDH 2</shortName>
        <shortName>FDH 2</shortName>
        <shortName>FLD 2</shortName>
        <shortName>GSH-FDH 2</shortName>
        <ecNumber evidence="2">1.1.1.-</ecNumber>
    </alternativeName>
</protein>
<keyword id="KW-0479">Metal-binding</keyword>
<keyword id="KW-0520">NAD</keyword>
<keyword id="KW-0560">Oxidoreductase</keyword>
<keyword id="KW-1185">Reference proteome</keyword>
<keyword id="KW-0862">Zinc</keyword>
<organism>
    <name type="scientific">Schizosaccharomyces pombe (strain 972 / ATCC 24843)</name>
    <name type="common">Fission yeast</name>
    <dbReference type="NCBI Taxonomy" id="284812"/>
    <lineage>
        <taxon>Eukaryota</taxon>
        <taxon>Fungi</taxon>
        <taxon>Dikarya</taxon>
        <taxon>Ascomycota</taxon>
        <taxon>Taphrinomycotina</taxon>
        <taxon>Schizosaccharomycetes</taxon>
        <taxon>Schizosaccharomycetales</taxon>
        <taxon>Schizosaccharomycetaceae</taxon>
        <taxon>Schizosaccharomyces</taxon>
    </lineage>
</organism>
<dbReference type="EC" id="1.1.1.284" evidence="2"/>
<dbReference type="EC" id="1.1.1.1" evidence="2"/>
<dbReference type="EC" id="1.1.1.-" evidence="2"/>
<dbReference type="EMBL" id="CU329672">
    <property type="protein sequence ID" value="CAA21785.1"/>
    <property type="molecule type" value="Genomic_DNA"/>
</dbReference>
<dbReference type="PIR" id="T40965">
    <property type="entry name" value="T40965"/>
</dbReference>
<dbReference type="RefSeq" id="NP_588247.1">
    <property type="nucleotide sequence ID" value="NM_001023237.2"/>
</dbReference>
<dbReference type="SMR" id="O74540"/>
<dbReference type="BioGRID" id="275383">
    <property type="interactions" value="1"/>
</dbReference>
<dbReference type="FunCoup" id="O74540">
    <property type="interactions" value="596"/>
</dbReference>
<dbReference type="STRING" id="284812.O74540"/>
<dbReference type="PaxDb" id="4896-SPCC13B11.04c.1"/>
<dbReference type="EnsemblFungi" id="SPCC13B11.04c.1">
    <property type="protein sequence ID" value="SPCC13B11.04c.1:pep"/>
    <property type="gene ID" value="SPCC13B11.04c"/>
</dbReference>
<dbReference type="GeneID" id="2538802"/>
<dbReference type="KEGG" id="spo:2538802"/>
<dbReference type="PomBase" id="SPCC13B11.04c"/>
<dbReference type="VEuPathDB" id="FungiDB:SPCC13B11.04c"/>
<dbReference type="eggNOG" id="KOG0022">
    <property type="taxonomic scope" value="Eukaryota"/>
</dbReference>
<dbReference type="HOGENOM" id="CLU_026673_14_0_1"/>
<dbReference type="InParanoid" id="O74540"/>
<dbReference type="OMA" id="IKGRSEM"/>
<dbReference type="PhylomeDB" id="O74540"/>
<dbReference type="Reactome" id="R-SPO-2161541">
    <property type="pathway name" value="Abacavir metabolism"/>
</dbReference>
<dbReference type="Reactome" id="R-SPO-5365859">
    <property type="pathway name" value="RA biosynthesis pathway"/>
</dbReference>
<dbReference type="Reactome" id="R-SPO-71384">
    <property type="pathway name" value="Ethanol oxidation"/>
</dbReference>
<dbReference type="PRO" id="PR:O74540"/>
<dbReference type="Proteomes" id="UP000002485">
    <property type="component" value="Chromosome III"/>
</dbReference>
<dbReference type="GO" id="GO:0005829">
    <property type="term" value="C:cytosol"/>
    <property type="evidence" value="ECO:0007005"/>
    <property type="project" value="PomBase"/>
</dbReference>
<dbReference type="GO" id="GO:0005739">
    <property type="term" value="C:mitochondrion"/>
    <property type="evidence" value="ECO:0000266"/>
    <property type="project" value="PomBase"/>
</dbReference>
<dbReference type="GO" id="GO:0005634">
    <property type="term" value="C:nucleus"/>
    <property type="evidence" value="ECO:0007005"/>
    <property type="project" value="PomBase"/>
</dbReference>
<dbReference type="GO" id="GO:0004022">
    <property type="term" value="F:alcohol dehydrogenase (NAD+) activity"/>
    <property type="evidence" value="ECO:0000318"/>
    <property type="project" value="GO_Central"/>
</dbReference>
<dbReference type="GO" id="GO:0033833">
    <property type="term" value="F:hydroxymethylfurfural reductase (NADH) activity"/>
    <property type="evidence" value="ECO:0000266"/>
    <property type="project" value="PomBase"/>
</dbReference>
<dbReference type="GO" id="GO:0106322">
    <property type="term" value="F:S-(hydroxymethyl)glutathione dehydrogenase (NAD+) activity"/>
    <property type="evidence" value="ECO:0007669"/>
    <property type="project" value="RHEA"/>
</dbReference>
<dbReference type="GO" id="GO:0106321">
    <property type="term" value="F:S-(hydroxymethyl)glutathione dehydrogenase (NADP+) activity"/>
    <property type="evidence" value="ECO:0007669"/>
    <property type="project" value="RHEA"/>
</dbReference>
<dbReference type="GO" id="GO:0051903">
    <property type="term" value="F:S-(hydroxymethyl)glutathione dehydrogenase [NAD(P)+] activity"/>
    <property type="evidence" value="ECO:0000318"/>
    <property type="project" value="GO_Central"/>
</dbReference>
<dbReference type="GO" id="GO:0080007">
    <property type="term" value="F:S-nitrosoglutathione reductase (NADH) activity"/>
    <property type="evidence" value="ECO:0007669"/>
    <property type="project" value="RHEA"/>
</dbReference>
<dbReference type="GO" id="GO:0008270">
    <property type="term" value="F:zinc ion binding"/>
    <property type="evidence" value="ECO:0000318"/>
    <property type="project" value="GO_Central"/>
</dbReference>
<dbReference type="GO" id="GO:0000947">
    <property type="term" value="P:amino acid catabolic process to alcohol via Ehrlich pathway"/>
    <property type="evidence" value="ECO:0000266"/>
    <property type="project" value="PomBase"/>
</dbReference>
<dbReference type="GO" id="GO:0046294">
    <property type="term" value="P:formaldehyde catabolic process"/>
    <property type="evidence" value="ECO:0000318"/>
    <property type="project" value="GO_Central"/>
</dbReference>
<dbReference type="CDD" id="cd08300">
    <property type="entry name" value="alcohol_DH_class_III"/>
    <property type="match status" value="1"/>
</dbReference>
<dbReference type="FunFam" id="3.40.50.720:FF:000003">
    <property type="entry name" value="S-(hydroxymethyl)glutathione dehydrogenase"/>
    <property type="match status" value="1"/>
</dbReference>
<dbReference type="FunFam" id="3.90.180.10:FF:000001">
    <property type="entry name" value="S-(hydroxymethyl)glutathione dehydrogenase"/>
    <property type="match status" value="1"/>
</dbReference>
<dbReference type="Gene3D" id="3.90.180.10">
    <property type="entry name" value="Medium-chain alcohol dehydrogenases, catalytic domain"/>
    <property type="match status" value="1"/>
</dbReference>
<dbReference type="Gene3D" id="3.40.50.720">
    <property type="entry name" value="NAD(P)-binding Rossmann-like Domain"/>
    <property type="match status" value="1"/>
</dbReference>
<dbReference type="InterPro" id="IPR013149">
    <property type="entry name" value="ADH-like_C"/>
</dbReference>
<dbReference type="InterPro" id="IPR013154">
    <property type="entry name" value="ADH-like_N"/>
</dbReference>
<dbReference type="InterPro" id="IPR014183">
    <property type="entry name" value="ADH_3"/>
</dbReference>
<dbReference type="InterPro" id="IPR002328">
    <property type="entry name" value="ADH_Zn_CS"/>
</dbReference>
<dbReference type="InterPro" id="IPR011032">
    <property type="entry name" value="GroES-like_sf"/>
</dbReference>
<dbReference type="InterPro" id="IPR036291">
    <property type="entry name" value="NAD(P)-bd_dom_sf"/>
</dbReference>
<dbReference type="NCBIfam" id="TIGR02818">
    <property type="entry name" value="adh_III_F_hyde"/>
    <property type="match status" value="1"/>
</dbReference>
<dbReference type="PANTHER" id="PTHR43880">
    <property type="entry name" value="ALCOHOL DEHYDROGENASE"/>
    <property type="match status" value="1"/>
</dbReference>
<dbReference type="PANTHER" id="PTHR43880:SF12">
    <property type="entry name" value="ALCOHOL DEHYDROGENASE CLASS-3"/>
    <property type="match status" value="1"/>
</dbReference>
<dbReference type="Pfam" id="PF08240">
    <property type="entry name" value="ADH_N"/>
    <property type="match status" value="1"/>
</dbReference>
<dbReference type="Pfam" id="PF00107">
    <property type="entry name" value="ADH_zinc_N"/>
    <property type="match status" value="1"/>
</dbReference>
<dbReference type="SUPFAM" id="SSF50129">
    <property type="entry name" value="GroES-like"/>
    <property type="match status" value="2"/>
</dbReference>
<dbReference type="SUPFAM" id="SSF51735">
    <property type="entry name" value="NAD(P)-binding Rossmann-fold domains"/>
    <property type="match status" value="1"/>
</dbReference>
<dbReference type="PROSITE" id="PS00059">
    <property type="entry name" value="ADH_ZINC"/>
    <property type="match status" value="1"/>
</dbReference>